<gene>
    <name evidence="1" type="primary">alaS</name>
    <name type="ordered locus">Francci3_3214</name>
</gene>
<comment type="function">
    <text evidence="1">Catalyzes the attachment of alanine to tRNA(Ala) in a two-step reaction: alanine is first activated by ATP to form Ala-AMP and then transferred to the acceptor end of tRNA(Ala). Also edits incorrectly charged Ser-tRNA(Ala) and Gly-tRNA(Ala) via its editing domain.</text>
</comment>
<comment type="catalytic activity">
    <reaction evidence="1">
        <text>tRNA(Ala) + L-alanine + ATP = L-alanyl-tRNA(Ala) + AMP + diphosphate</text>
        <dbReference type="Rhea" id="RHEA:12540"/>
        <dbReference type="Rhea" id="RHEA-COMP:9657"/>
        <dbReference type="Rhea" id="RHEA-COMP:9923"/>
        <dbReference type="ChEBI" id="CHEBI:30616"/>
        <dbReference type="ChEBI" id="CHEBI:33019"/>
        <dbReference type="ChEBI" id="CHEBI:57972"/>
        <dbReference type="ChEBI" id="CHEBI:78442"/>
        <dbReference type="ChEBI" id="CHEBI:78497"/>
        <dbReference type="ChEBI" id="CHEBI:456215"/>
        <dbReference type="EC" id="6.1.1.7"/>
    </reaction>
</comment>
<comment type="cofactor">
    <cofactor evidence="1">
        <name>Zn(2+)</name>
        <dbReference type="ChEBI" id="CHEBI:29105"/>
    </cofactor>
    <text evidence="1">Binds 1 zinc ion per subunit.</text>
</comment>
<comment type="subcellular location">
    <subcellularLocation>
        <location evidence="1">Cytoplasm</location>
    </subcellularLocation>
</comment>
<comment type="domain">
    <text evidence="1">Consists of three domains; the N-terminal catalytic domain, the editing domain and the C-terminal C-Ala domain. The editing domain removes incorrectly charged amino acids, while the C-Ala domain, along with tRNA(Ala), serves as a bridge to cooperatively bring together the editing and aminoacylation centers thus stimulating deacylation of misacylated tRNAs.</text>
</comment>
<comment type="similarity">
    <text evidence="1">Belongs to the class-II aminoacyl-tRNA synthetase family.</text>
</comment>
<feature type="chain" id="PRO_0000347618" description="Alanine--tRNA ligase">
    <location>
        <begin position="1"/>
        <end position="881"/>
    </location>
</feature>
<feature type="binding site" evidence="1">
    <location>
        <position position="566"/>
    </location>
    <ligand>
        <name>Zn(2+)</name>
        <dbReference type="ChEBI" id="CHEBI:29105"/>
    </ligand>
</feature>
<feature type="binding site" evidence="1">
    <location>
        <position position="570"/>
    </location>
    <ligand>
        <name>Zn(2+)</name>
        <dbReference type="ChEBI" id="CHEBI:29105"/>
    </ligand>
</feature>
<feature type="binding site" evidence="1">
    <location>
        <position position="668"/>
    </location>
    <ligand>
        <name>Zn(2+)</name>
        <dbReference type="ChEBI" id="CHEBI:29105"/>
    </ligand>
</feature>
<feature type="binding site" evidence="1">
    <location>
        <position position="672"/>
    </location>
    <ligand>
        <name>Zn(2+)</name>
        <dbReference type="ChEBI" id="CHEBI:29105"/>
    </ligand>
</feature>
<evidence type="ECO:0000255" key="1">
    <source>
        <dbReference type="HAMAP-Rule" id="MF_00036"/>
    </source>
</evidence>
<proteinExistence type="inferred from homology"/>
<keyword id="KW-0030">Aminoacyl-tRNA synthetase</keyword>
<keyword id="KW-0067">ATP-binding</keyword>
<keyword id="KW-0963">Cytoplasm</keyword>
<keyword id="KW-0436">Ligase</keyword>
<keyword id="KW-0479">Metal-binding</keyword>
<keyword id="KW-0547">Nucleotide-binding</keyword>
<keyword id="KW-0648">Protein biosynthesis</keyword>
<keyword id="KW-1185">Reference proteome</keyword>
<keyword id="KW-0694">RNA-binding</keyword>
<keyword id="KW-0820">tRNA-binding</keyword>
<keyword id="KW-0862">Zinc</keyword>
<sequence>MDTAEIRSRFLNHFARRGHTVVPSASLVAQDPTLLLVNAGMVPFKPYFLGDLPAPWPRAASVQKCVRTVDIENVGHTARHASFFQMCGNFSFGDYFKAEAIPFAFELLTEGFGFKADDLWATVYLDDDEAEGIWRKLLPAERIQRRGKEDNFWSMGVPGPCGPCSEIYFDRGCAYGREGGPIADEERYLEVWNLVFMQYERGEGAGYDYPIERELPARNIDTGMGLERMATILQGVDNLYEIDISRPVLDAAGRLTGRRYGADPADDVRLRVIADHTRTAAMLISDGVVPSNEGRGYVLRRMLRRAIRNARLLGAHEPVMSELFAVVGSAMGTIYPELLDNAETITGVAVAEEQAFAETLRTGTTIFDTAARQARSLGSTTLGGEAAFKLHDTYGFPIDLTLEMAAEAGLSVDEAGFRRLMDRQRQAAKADRAARRIGNVDLSAFRPILARSGPTTFTGYEELSRTSGVVGLVGIADGAGLAAAGEDTEVGVVLDATPFYAESGGQEPDLGRLRFDGGEVEVLDVQRPVPDLVLHRVRVLGGELRLGVEVFAEVDADRRRAVSRSHTATHLVHTAFRRALGEGATQAGSLNSPGRLRFDFHALGAVPPSVLADVEDEINEVALRDLPVRAFVTTQEEARRLGAMALFGEKYGDAVRVVDVGDYARELCGGTHVASSAQLGAVKLLSEASISAGTRRVEGLVGLDAFRYLAREHLLVSQLSTALKARPDELVDRVTDIVGRLRDAERELERLRAAAVLAGAGALAEGAEEVAGVAVVTAEVPAGTAPDDVRLLALDVRGRLAGRPAVVAVAKADGSSIVVVTDDAARGRGLRAGDLVRQSWASLGGKGGGKPDVAQGGGGNPQLVPAVFARLRGLVAEHASR</sequence>
<reference key="1">
    <citation type="journal article" date="2007" name="Genome Res.">
        <title>Genome characteristics of facultatively symbiotic Frankia sp. strains reflect host range and host plant biogeography.</title>
        <authorList>
            <person name="Normand P."/>
            <person name="Lapierre P."/>
            <person name="Tisa L.S."/>
            <person name="Gogarten J.P."/>
            <person name="Alloisio N."/>
            <person name="Bagnarol E."/>
            <person name="Bassi C.A."/>
            <person name="Berry A.M."/>
            <person name="Bickhart D.M."/>
            <person name="Choisne N."/>
            <person name="Couloux A."/>
            <person name="Cournoyer B."/>
            <person name="Cruveiller S."/>
            <person name="Daubin V."/>
            <person name="Demange N."/>
            <person name="Francino M.P."/>
            <person name="Goltsman E."/>
            <person name="Huang Y."/>
            <person name="Kopp O.R."/>
            <person name="Labarre L."/>
            <person name="Lapidus A."/>
            <person name="Lavire C."/>
            <person name="Marechal J."/>
            <person name="Martinez M."/>
            <person name="Mastronunzio J.E."/>
            <person name="Mullin B.C."/>
            <person name="Niemann J."/>
            <person name="Pujic P."/>
            <person name="Rawnsley T."/>
            <person name="Rouy Z."/>
            <person name="Schenowitz C."/>
            <person name="Sellstedt A."/>
            <person name="Tavares F."/>
            <person name="Tomkins J.P."/>
            <person name="Vallenet D."/>
            <person name="Valverde C."/>
            <person name="Wall L.G."/>
            <person name="Wang Y."/>
            <person name="Medigue C."/>
            <person name="Benson D.R."/>
        </authorList>
    </citation>
    <scope>NUCLEOTIDE SEQUENCE [LARGE SCALE GENOMIC DNA]</scope>
    <source>
        <strain>DSM 45818 / CECT 9043 / HFP020203 / CcI3</strain>
    </source>
</reference>
<dbReference type="EC" id="6.1.1.7" evidence="1"/>
<dbReference type="EMBL" id="CP000249">
    <property type="protein sequence ID" value="ABD12571.1"/>
    <property type="molecule type" value="Genomic_DNA"/>
</dbReference>
<dbReference type="RefSeq" id="WP_011437599.1">
    <property type="nucleotide sequence ID" value="NZ_JENI01000058.1"/>
</dbReference>
<dbReference type="SMR" id="Q2J821"/>
<dbReference type="STRING" id="106370.Francci3_3214"/>
<dbReference type="KEGG" id="fra:Francci3_3214"/>
<dbReference type="eggNOG" id="COG0013">
    <property type="taxonomic scope" value="Bacteria"/>
</dbReference>
<dbReference type="HOGENOM" id="CLU_004485_1_1_11"/>
<dbReference type="OrthoDB" id="9803884at2"/>
<dbReference type="PhylomeDB" id="Q2J821"/>
<dbReference type="Proteomes" id="UP000001937">
    <property type="component" value="Chromosome"/>
</dbReference>
<dbReference type="GO" id="GO:0005829">
    <property type="term" value="C:cytosol"/>
    <property type="evidence" value="ECO:0007669"/>
    <property type="project" value="TreeGrafter"/>
</dbReference>
<dbReference type="GO" id="GO:0004813">
    <property type="term" value="F:alanine-tRNA ligase activity"/>
    <property type="evidence" value="ECO:0007669"/>
    <property type="project" value="UniProtKB-UniRule"/>
</dbReference>
<dbReference type="GO" id="GO:0002161">
    <property type="term" value="F:aminoacyl-tRNA deacylase activity"/>
    <property type="evidence" value="ECO:0007669"/>
    <property type="project" value="TreeGrafter"/>
</dbReference>
<dbReference type="GO" id="GO:0005524">
    <property type="term" value="F:ATP binding"/>
    <property type="evidence" value="ECO:0007669"/>
    <property type="project" value="UniProtKB-UniRule"/>
</dbReference>
<dbReference type="GO" id="GO:0000049">
    <property type="term" value="F:tRNA binding"/>
    <property type="evidence" value="ECO:0007669"/>
    <property type="project" value="UniProtKB-KW"/>
</dbReference>
<dbReference type="GO" id="GO:0008270">
    <property type="term" value="F:zinc ion binding"/>
    <property type="evidence" value="ECO:0007669"/>
    <property type="project" value="UniProtKB-UniRule"/>
</dbReference>
<dbReference type="GO" id="GO:0006419">
    <property type="term" value="P:alanyl-tRNA aminoacylation"/>
    <property type="evidence" value="ECO:0007669"/>
    <property type="project" value="UniProtKB-UniRule"/>
</dbReference>
<dbReference type="CDD" id="cd00673">
    <property type="entry name" value="AlaRS_core"/>
    <property type="match status" value="1"/>
</dbReference>
<dbReference type="FunFam" id="3.10.310.40:FF:000001">
    <property type="entry name" value="Alanine--tRNA ligase"/>
    <property type="match status" value="1"/>
</dbReference>
<dbReference type="FunFam" id="3.30.54.20:FF:000001">
    <property type="entry name" value="Alanine--tRNA ligase"/>
    <property type="match status" value="1"/>
</dbReference>
<dbReference type="FunFam" id="3.30.930.10:FF:000004">
    <property type="entry name" value="Alanine--tRNA ligase"/>
    <property type="match status" value="1"/>
</dbReference>
<dbReference type="FunFam" id="3.30.980.10:FF:000004">
    <property type="entry name" value="Alanine--tRNA ligase, cytoplasmic"/>
    <property type="match status" value="1"/>
</dbReference>
<dbReference type="Gene3D" id="2.40.30.130">
    <property type="match status" value="1"/>
</dbReference>
<dbReference type="Gene3D" id="3.10.310.40">
    <property type="match status" value="1"/>
</dbReference>
<dbReference type="Gene3D" id="3.30.54.20">
    <property type="match status" value="1"/>
</dbReference>
<dbReference type="Gene3D" id="6.10.250.550">
    <property type="match status" value="1"/>
</dbReference>
<dbReference type="Gene3D" id="3.30.930.10">
    <property type="entry name" value="Bira Bifunctional Protein, Domain 2"/>
    <property type="match status" value="1"/>
</dbReference>
<dbReference type="Gene3D" id="3.30.980.10">
    <property type="entry name" value="Threonyl-trna Synthetase, Chain A, domain 2"/>
    <property type="match status" value="1"/>
</dbReference>
<dbReference type="HAMAP" id="MF_00036_B">
    <property type="entry name" value="Ala_tRNA_synth_B"/>
    <property type="match status" value="1"/>
</dbReference>
<dbReference type="InterPro" id="IPR045864">
    <property type="entry name" value="aa-tRNA-synth_II/BPL/LPL"/>
</dbReference>
<dbReference type="InterPro" id="IPR002318">
    <property type="entry name" value="Ala-tRNA-lgiase_IIc"/>
</dbReference>
<dbReference type="InterPro" id="IPR018162">
    <property type="entry name" value="Ala-tRNA-ligase_IIc_anticod-bd"/>
</dbReference>
<dbReference type="InterPro" id="IPR018165">
    <property type="entry name" value="Ala-tRNA-synth_IIc_core"/>
</dbReference>
<dbReference type="InterPro" id="IPR018164">
    <property type="entry name" value="Ala-tRNA-synth_IIc_N"/>
</dbReference>
<dbReference type="InterPro" id="IPR050058">
    <property type="entry name" value="Ala-tRNA_ligase"/>
</dbReference>
<dbReference type="InterPro" id="IPR023033">
    <property type="entry name" value="Ala_tRNA_ligase_euk/bac"/>
</dbReference>
<dbReference type="InterPro" id="IPR003156">
    <property type="entry name" value="DHHA1_dom"/>
</dbReference>
<dbReference type="InterPro" id="IPR018163">
    <property type="entry name" value="Thr/Ala-tRNA-synth_IIc_edit"/>
</dbReference>
<dbReference type="InterPro" id="IPR009000">
    <property type="entry name" value="Transl_B-barrel_sf"/>
</dbReference>
<dbReference type="InterPro" id="IPR012947">
    <property type="entry name" value="tRNA_SAD"/>
</dbReference>
<dbReference type="NCBIfam" id="TIGR00344">
    <property type="entry name" value="alaS"/>
    <property type="match status" value="1"/>
</dbReference>
<dbReference type="PANTHER" id="PTHR11777:SF9">
    <property type="entry name" value="ALANINE--TRNA LIGASE, CYTOPLASMIC"/>
    <property type="match status" value="1"/>
</dbReference>
<dbReference type="PANTHER" id="PTHR11777">
    <property type="entry name" value="ALANYL-TRNA SYNTHETASE"/>
    <property type="match status" value="1"/>
</dbReference>
<dbReference type="Pfam" id="PF02272">
    <property type="entry name" value="DHHA1"/>
    <property type="match status" value="1"/>
</dbReference>
<dbReference type="Pfam" id="PF01411">
    <property type="entry name" value="tRNA-synt_2c"/>
    <property type="match status" value="1"/>
</dbReference>
<dbReference type="Pfam" id="PF07973">
    <property type="entry name" value="tRNA_SAD"/>
    <property type="match status" value="1"/>
</dbReference>
<dbReference type="PRINTS" id="PR00980">
    <property type="entry name" value="TRNASYNTHALA"/>
</dbReference>
<dbReference type="SMART" id="SM00863">
    <property type="entry name" value="tRNA_SAD"/>
    <property type="match status" value="1"/>
</dbReference>
<dbReference type="SUPFAM" id="SSF55681">
    <property type="entry name" value="Class II aaRS and biotin synthetases"/>
    <property type="match status" value="1"/>
</dbReference>
<dbReference type="SUPFAM" id="SSF101353">
    <property type="entry name" value="Putative anticodon-binding domain of alanyl-tRNA synthetase (AlaRS)"/>
    <property type="match status" value="1"/>
</dbReference>
<dbReference type="SUPFAM" id="SSF55186">
    <property type="entry name" value="ThrRS/AlaRS common domain"/>
    <property type="match status" value="1"/>
</dbReference>
<dbReference type="SUPFAM" id="SSF50447">
    <property type="entry name" value="Translation proteins"/>
    <property type="match status" value="1"/>
</dbReference>
<dbReference type="PROSITE" id="PS50860">
    <property type="entry name" value="AA_TRNA_LIGASE_II_ALA"/>
    <property type="match status" value="1"/>
</dbReference>
<accession>Q2J821</accession>
<organism>
    <name type="scientific">Frankia casuarinae (strain DSM 45818 / CECT 9043 / HFP020203 / CcI3)</name>
    <dbReference type="NCBI Taxonomy" id="106370"/>
    <lineage>
        <taxon>Bacteria</taxon>
        <taxon>Bacillati</taxon>
        <taxon>Actinomycetota</taxon>
        <taxon>Actinomycetes</taxon>
        <taxon>Frankiales</taxon>
        <taxon>Frankiaceae</taxon>
        <taxon>Frankia</taxon>
    </lineage>
</organism>
<name>SYA_FRACC</name>
<protein>
    <recommendedName>
        <fullName evidence="1">Alanine--tRNA ligase</fullName>
        <ecNumber evidence="1">6.1.1.7</ecNumber>
    </recommendedName>
    <alternativeName>
        <fullName evidence="1">Alanyl-tRNA synthetase</fullName>
        <shortName evidence="1">AlaRS</shortName>
    </alternativeName>
</protein>